<accession>C1ALD5</accession>
<comment type="cofactor">
    <cofactor evidence="1">
        <name>Zn(2+)</name>
        <dbReference type="ChEBI" id="CHEBI:29105"/>
    </cofactor>
</comment>
<comment type="similarity">
    <text evidence="1">Belongs to the peptidase M18 family.</text>
</comment>
<evidence type="ECO:0000255" key="1">
    <source>
        <dbReference type="HAMAP-Rule" id="MF_00467"/>
    </source>
</evidence>
<proteinExistence type="inferred from homology"/>
<name>APEB_MYCBT</name>
<feature type="chain" id="PRO_1000135451" description="Probable M18 family aminopeptidase 2">
    <location>
        <begin position="1"/>
        <end position="433"/>
    </location>
</feature>
<feature type="binding site" evidence="1">
    <location>
        <position position="79"/>
    </location>
    <ligand>
        <name>Zn(2+)</name>
        <dbReference type="ChEBI" id="CHEBI:29105"/>
    </ligand>
</feature>
<feature type="binding site" evidence="1">
    <location>
        <position position="153"/>
    </location>
    <ligand>
        <name>Zn(2+)</name>
        <dbReference type="ChEBI" id="CHEBI:29105"/>
    </ligand>
</feature>
<feature type="binding site" evidence="1">
    <location>
        <position position="404"/>
    </location>
    <ligand>
        <name>Zn(2+)</name>
        <dbReference type="ChEBI" id="CHEBI:29105"/>
    </ligand>
</feature>
<keyword id="KW-0031">Aminopeptidase</keyword>
<keyword id="KW-0378">Hydrolase</keyword>
<keyword id="KW-0479">Metal-binding</keyword>
<keyword id="KW-0482">Metalloprotease</keyword>
<keyword id="KW-0645">Protease</keyword>
<keyword id="KW-0862">Zinc</keyword>
<dbReference type="EC" id="3.4.11.-" evidence="1"/>
<dbReference type="EMBL" id="AP010918">
    <property type="protein sequence ID" value="BAH25114.1"/>
    <property type="molecule type" value="Genomic_DNA"/>
</dbReference>
<dbReference type="RefSeq" id="WP_003404103.1">
    <property type="nucleotide sequence ID" value="NZ_CP014566.1"/>
</dbReference>
<dbReference type="SMR" id="C1ALD5"/>
<dbReference type="KEGG" id="mbt:JTY_0822"/>
<dbReference type="HOGENOM" id="CLU_019532_2_0_11"/>
<dbReference type="GO" id="GO:0005737">
    <property type="term" value="C:cytoplasm"/>
    <property type="evidence" value="ECO:0007669"/>
    <property type="project" value="UniProtKB-ARBA"/>
</dbReference>
<dbReference type="GO" id="GO:0004177">
    <property type="term" value="F:aminopeptidase activity"/>
    <property type="evidence" value="ECO:0007669"/>
    <property type="project" value="UniProtKB-UniRule"/>
</dbReference>
<dbReference type="GO" id="GO:0008237">
    <property type="term" value="F:metallopeptidase activity"/>
    <property type="evidence" value="ECO:0007669"/>
    <property type="project" value="UniProtKB-UniRule"/>
</dbReference>
<dbReference type="GO" id="GO:0008270">
    <property type="term" value="F:zinc ion binding"/>
    <property type="evidence" value="ECO:0007669"/>
    <property type="project" value="UniProtKB-UniRule"/>
</dbReference>
<dbReference type="GO" id="GO:0006508">
    <property type="term" value="P:proteolysis"/>
    <property type="evidence" value="ECO:0007669"/>
    <property type="project" value="UniProtKB-UniRule"/>
</dbReference>
<dbReference type="CDD" id="cd05658">
    <property type="entry name" value="M18_DAP"/>
    <property type="match status" value="1"/>
</dbReference>
<dbReference type="FunFam" id="2.30.250.10:FF:000004">
    <property type="entry name" value="Probable M18 family aminopeptidase 2"/>
    <property type="match status" value="1"/>
</dbReference>
<dbReference type="Gene3D" id="2.30.250.10">
    <property type="entry name" value="Aminopeptidase i, Domain 2"/>
    <property type="match status" value="1"/>
</dbReference>
<dbReference type="Gene3D" id="3.40.630.10">
    <property type="entry name" value="Zn peptidases"/>
    <property type="match status" value="1"/>
</dbReference>
<dbReference type="HAMAP" id="MF_00467">
    <property type="entry name" value="Aminopeptidase_M18_2"/>
    <property type="match status" value="1"/>
</dbReference>
<dbReference type="InterPro" id="IPR022984">
    <property type="entry name" value="M18_aminopeptidase_2"/>
</dbReference>
<dbReference type="InterPro" id="IPR001948">
    <property type="entry name" value="Peptidase_M18"/>
</dbReference>
<dbReference type="InterPro" id="IPR023358">
    <property type="entry name" value="Peptidase_M18_dom2"/>
</dbReference>
<dbReference type="NCBIfam" id="NF002759">
    <property type="entry name" value="PRK02813.1"/>
    <property type="match status" value="1"/>
</dbReference>
<dbReference type="PANTHER" id="PTHR28570">
    <property type="entry name" value="ASPARTYL AMINOPEPTIDASE"/>
    <property type="match status" value="1"/>
</dbReference>
<dbReference type="PANTHER" id="PTHR28570:SF3">
    <property type="entry name" value="ASPARTYL AMINOPEPTIDASE"/>
    <property type="match status" value="1"/>
</dbReference>
<dbReference type="Pfam" id="PF02127">
    <property type="entry name" value="Peptidase_M18"/>
    <property type="match status" value="1"/>
</dbReference>
<dbReference type="PRINTS" id="PR00932">
    <property type="entry name" value="AMINO1PTASE"/>
</dbReference>
<dbReference type="SUPFAM" id="SSF101821">
    <property type="entry name" value="Aminopeptidase/glucanase lid domain"/>
    <property type="match status" value="1"/>
</dbReference>
<dbReference type="SUPFAM" id="SSF53187">
    <property type="entry name" value="Zn-dependent exopeptidases"/>
    <property type="match status" value="1"/>
</dbReference>
<reference key="1">
    <citation type="journal article" date="2009" name="Vaccine">
        <title>Whole genome sequence analysis of Mycobacterium bovis bacillus Calmette-Guerin (BCG) Tokyo 172: a comparative study of BCG vaccine substrains.</title>
        <authorList>
            <person name="Seki M."/>
            <person name="Honda I."/>
            <person name="Fujita I."/>
            <person name="Yano I."/>
            <person name="Yamamoto S."/>
            <person name="Koyama A."/>
        </authorList>
    </citation>
    <scope>NUCLEOTIDE SEQUENCE [LARGE SCALE GENOMIC DNA]</scope>
    <source>
        <strain>BCG / Tokyo 172 / ATCC 35737 / TMC 1019</strain>
    </source>
</reference>
<protein>
    <recommendedName>
        <fullName evidence="1">Probable M18 family aminopeptidase 2</fullName>
        <ecNumber evidence="1">3.4.11.-</ecNumber>
    </recommendedName>
</protein>
<organism>
    <name type="scientific">Mycobacterium bovis (strain BCG / Tokyo 172 / ATCC 35737 / TMC 1019)</name>
    <dbReference type="NCBI Taxonomy" id="561275"/>
    <lineage>
        <taxon>Bacteria</taxon>
        <taxon>Bacillati</taxon>
        <taxon>Actinomycetota</taxon>
        <taxon>Actinomycetes</taxon>
        <taxon>Mycobacteriales</taxon>
        <taxon>Mycobacteriaceae</taxon>
        <taxon>Mycobacterium</taxon>
        <taxon>Mycobacterium tuberculosis complex</taxon>
    </lineage>
</organism>
<sequence length="433" mass="46056">MAATAHGLCEFIDASPSPFHVCATVAGRLLGAGYRELREADRWPDKPGRYFTVRAGSLVAWNAEQSGHTQVPFRIVGAHTDSPNLRVKQHPDRLVAGWHVVALQPYGGVWLHSWLDRDLGISGRLSVRDGTGVSHRLVRIDDPILRVPQLAIHLAEDRKSLTLDPQRHINAVWGVGERVESFVGYVAQRAGVAAADVLAADLMTHDLTPSALIGASVNGTASLLSAPRLDNQASCYAGMEALLAVDVDSASSGFVPVLAIFDHEEVGSASGHGAQSDLLSSVLERIVLAAGGTREDFLRRLTTSMLASADMAHATHPNYPDRHEPSHPIEVNAGPVLKVHPNLRYATDGRTAAAFALACQRAGVPMQRYEHRADLPCGSTIGPLAAARTGIPTVDVGAAQLAMHSARELMGAHDVAAYSAALQAFLSAELSEA</sequence>
<gene>
    <name evidence="1" type="primary">apeB</name>
    <name type="ordered locus">JTY_0822</name>
</gene>